<evidence type="ECO:0000255" key="1">
    <source>
        <dbReference type="HAMAP-Rule" id="MF_03010"/>
    </source>
</evidence>
<evidence type="ECO:0000255" key="2">
    <source>
        <dbReference type="PROSITE-ProRule" id="PRU01185"/>
    </source>
</evidence>
<accession>B4JVG7</accession>
<proteinExistence type="inferred from homology"/>
<protein>
    <recommendedName>
        <fullName evidence="1">Eukaryotic translation initiation factor 3 subunit K</fullName>
        <shortName evidence="1">eIF3k</shortName>
    </recommendedName>
    <alternativeName>
        <fullName evidence="1">eIF-3 p25</fullName>
    </alternativeName>
</protein>
<dbReference type="EMBL" id="CH916375">
    <property type="protein sequence ID" value="EDV98435.1"/>
    <property type="molecule type" value="Genomic_DNA"/>
</dbReference>
<dbReference type="SMR" id="B4JVG7"/>
<dbReference type="FunCoup" id="B4JVG7">
    <property type="interactions" value="1913"/>
</dbReference>
<dbReference type="STRING" id="7222.B4JVG7"/>
<dbReference type="EnsemblMetazoa" id="FBtr0158093">
    <property type="protein sequence ID" value="FBpp0156585"/>
    <property type="gene ID" value="FBgn0130137"/>
</dbReference>
<dbReference type="EnsemblMetazoa" id="XM_001995327.3">
    <property type="protein sequence ID" value="XP_001995363.1"/>
    <property type="gene ID" value="LOC6568772"/>
</dbReference>
<dbReference type="GeneID" id="6568772"/>
<dbReference type="KEGG" id="dgr:6568772"/>
<dbReference type="CTD" id="27335"/>
<dbReference type="eggNOG" id="KOG3252">
    <property type="taxonomic scope" value="Eukaryota"/>
</dbReference>
<dbReference type="HOGENOM" id="CLU_076723_1_0_1"/>
<dbReference type="InParanoid" id="B4JVG7"/>
<dbReference type="OMA" id="WKHQGQG"/>
<dbReference type="OrthoDB" id="337745at2759"/>
<dbReference type="PhylomeDB" id="B4JVG7"/>
<dbReference type="Proteomes" id="UP000001070">
    <property type="component" value="Unassembled WGS sequence"/>
</dbReference>
<dbReference type="GO" id="GO:0016282">
    <property type="term" value="C:eukaryotic 43S preinitiation complex"/>
    <property type="evidence" value="ECO:0007669"/>
    <property type="project" value="UniProtKB-UniRule"/>
</dbReference>
<dbReference type="GO" id="GO:0033290">
    <property type="term" value="C:eukaryotic 48S preinitiation complex"/>
    <property type="evidence" value="ECO:0007669"/>
    <property type="project" value="UniProtKB-UniRule"/>
</dbReference>
<dbReference type="GO" id="GO:0005852">
    <property type="term" value="C:eukaryotic translation initiation factor 3 complex"/>
    <property type="evidence" value="ECO:0007669"/>
    <property type="project" value="UniProtKB-UniRule"/>
</dbReference>
<dbReference type="GO" id="GO:0043022">
    <property type="term" value="F:ribosome binding"/>
    <property type="evidence" value="ECO:0007669"/>
    <property type="project" value="InterPro"/>
</dbReference>
<dbReference type="GO" id="GO:0003723">
    <property type="term" value="F:RNA binding"/>
    <property type="evidence" value="ECO:0007669"/>
    <property type="project" value="UniProtKB-UniRule"/>
</dbReference>
<dbReference type="GO" id="GO:0003743">
    <property type="term" value="F:translation initiation factor activity"/>
    <property type="evidence" value="ECO:0007669"/>
    <property type="project" value="UniProtKB-UniRule"/>
</dbReference>
<dbReference type="GO" id="GO:0001732">
    <property type="term" value="P:formation of cytoplasmic translation initiation complex"/>
    <property type="evidence" value="ECO:0007669"/>
    <property type="project" value="UniProtKB-UniRule"/>
</dbReference>
<dbReference type="GO" id="GO:0006446">
    <property type="term" value="P:regulation of translational initiation"/>
    <property type="evidence" value="ECO:0007669"/>
    <property type="project" value="InterPro"/>
</dbReference>
<dbReference type="FunFam" id="1.10.10.10:FF:000212">
    <property type="entry name" value="Eukaryotic translation initiation factor 3 subunit K"/>
    <property type="match status" value="1"/>
</dbReference>
<dbReference type="FunFam" id="1.25.40.250:FF:000001">
    <property type="entry name" value="Eukaryotic translation initiation factor 3 subunit K"/>
    <property type="match status" value="1"/>
</dbReference>
<dbReference type="Gene3D" id="1.25.40.250">
    <property type="entry name" value="ARM repeat, domain 1"/>
    <property type="match status" value="1"/>
</dbReference>
<dbReference type="Gene3D" id="1.10.10.10">
    <property type="entry name" value="Winged helix-like DNA-binding domain superfamily/Winged helix DNA-binding domain"/>
    <property type="match status" value="1"/>
</dbReference>
<dbReference type="HAMAP" id="MF_03010">
    <property type="entry name" value="eIF3k"/>
    <property type="match status" value="1"/>
</dbReference>
<dbReference type="InterPro" id="IPR016024">
    <property type="entry name" value="ARM-type_fold"/>
</dbReference>
<dbReference type="InterPro" id="IPR033464">
    <property type="entry name" value="CSN8_PSD8_EIF3K"/>
</dbReference>
<dbReference type="InterPro" id="IPR009374">
    <property type="entry name" value="eIF3k"/>
</dbReference>
<dbReference type="InterPro" id="IPR000717">
    <property type="entry name" value="PCI_dom"/>
</dbReference>
<dbReference type="InterPro" id="IPR016020">
    <property type="entry name" value="Transl_init_fac_sub12_N_euk"/>
</dbReference>
<dbReference type="InterPro" id="IPR036388">
    <property type="entry name" value="WH-like_DNA-bd_sf"/>
</dbReference>
<dbReference type="InterPro" id="IPR036390">
    <property type="entry name" value="WH_DNA-bd_sf"/>
</dbReference>
<dbReference type="PANTHER" id="PTHR13022">
    <property type="entry name" value="EUKARYOTIC TRANSLATION INITIATION FACTOR 3 SUBUNIT 11"/>
    <property type="match status" value="1"/>
</dbReference>
<dbReference type="PANTHER" id="PTHR13022:SF0">
    <property type="entry name" value="EUKARYOTIC TRANSLATION INITIATION FACTOR 3 SUBUNIT K"/>
    <property type="match status" value="1"/>
</dbReference>
<dbReference type="Pfam" id="PF10075">
    <property type="entry name" value="CSN8_PSD8_EIF3K"/>
    <property type="match status" value="1"/>
</dbReference>
<dbReference type="SUPFAM" id="SSF48371">
    <property type="entry name" value="ARM repeat"/>
    <property type="match status" value="1"/>
</dbReference>
<dbReference type="SUPFAM" id="SSF46785">
    <property type="entry name" value="Winged helix' DNA-binding domain"/>
    <property type="match status" value="1"/>
</dbReference>
<dbReference type="PROSITE" id="PS50250">
    <property type="entry name" value="PCI"/>
    <property type="match status" value="1"/>
</dbReference>
<comment type="function">
    <text evidence="1">Component of the eukaryotic translation initiation factor 3 (eIF-3) complex, which is involved in protein synthesis of a specialized repertoire of mRNAs and, together with other initiation factors, stimulates binding of mRNA and methionyl-tRNAi to the 40S ribosome. The eIF-3 complex specifically targets and initiates translation of a subset of mRNAs involved in cell proliferation.</text>
</comment>
<comment type="subunit">
    <text evidence="1">Component of the eukaryotic translation initiation factor 3 (eIF-3) complex. The eIF-3 complex interacts with pix.</text>
</comment>
<comment type="subcellular location">
    <subcellularLocation>
        <location evidence="1">Cytoplasm</location>
    </subcellularLocation>
</comment>
<comment type="similarity">
    <text evidence="1">Belongs to the eIF-3 subunit K family.</text>
</comment>
<organism>
    <name type="scientific">Drosophila grimshawi</name>
    <name type="common">Hawaiian fruit fly</name>
    <name type="synonym">Idiomyia grimshawi</name>
    <dbReference type="NCBI Taxonomy" id="7222"/>
    <lineage>
        <taxon>Eukaryota</taxon>
        <taxon>Metazoa</taxon>
        <taxon>Ecdysozoa</taxon>
        <taxon>Arthropoda</taxon>
        <taxon>Hexapoda</taxon>
        <taxon>Insecta</taxon>
        <taxon>Pterygota</taxon>
        <taxon>Neoptera</taxon>
        <taxon>Endopterygota</taxon>
        <taxon>Diptera</taxon>
        <taxon>Brachycera</taxon>
        <taxon>Muscomorpha</taxon>
        <taxon>Ephydroidea</taxon>
        <taxon>Drosophilidae</taxon>
        <taxon>Drosophila</taxon>
        <taxon>Hawaiian Drosophila</taxon>
    </lineage>
</organism>
<feature type="chain" id="PRO_0000365042" description="Eukaryotic translation initiation factor 3 subunit K">
    <location>
        <begin position="1"/>
        <end position="222"/>
    </location>
</feature>
<feature type="domain" description="PCI" evidence="2">
    <location>
        <begin position="46"/>
        <end position="208"/>
    </location>
</feature>
<keyword id="KW-0963">Cytoplasm</keyword>
<keyword id="KW-0396">Initiation factor</keyword>
<keyword id="KW-0648">Protein biosynthesis</keyword>
<keyword id="KW-1185">Reference proteome</keyword>
<sequence>MSHLVKMENGQSQTIQEMLGCIERYNPDHLKILESYVQDQAKNNSYDLEANLAVLKLYQFNPHMLNFDITYTILLKSLTNLPHTDFVMAKCLLLPQQMKDENVQTIIDLADILERADFTLFWQRAEVNRTMFRHIAGFHDSIRKFVSHVVGTTFQTIKKDLLKELLGGIEDSTLESWIKRNGWKHQGHDLVVVATQDDKIKTKNITEKIEFENVGALMAQCL</sequence>
<name>EIF3K_DROGR</name>
<gene>
    <name type="ORF">GH22679</name>
</gene>
<reference key="1">
    <citation type="journal article" date="2007" name="Nature">
        <title>Evolution of genes and genomes on the Drosophila phylogeny.</title>
        <authorList>
            <consortium name="Drosophila 12 genomes consortium"/>
        </authorList>
    </citation>
    <scope>NUCLEOTIDE SEQUENCE [LARGE SCALE GENOMIC DNA]</scope>
    <source>
        <strain>Tucson 15287-2541.00</strain>
    </source>
</reference>